<evidence type="ECO:0000250" key="1"/>
<evidence type="ECO:0000305" key="2"/>
<protein>
    <recommendedName>
        <fullName evidence="2">Large ribosomal subunit protein uL18c</fullName>
    </recommendedName>
    <alternativeName>
        <fullName>50S ribosomal protein L18, chloroplastic</fullName>
    </alternativeName>
</protein>
<name>RK18_GUITH</name>
<dbReference type="EMBL" id="AF041468">
    <property type="protein sequence ID" value="AAC35718.1"/>
    <property type="molecule type" value="Genomic_DNA"/>
</dbReference>
<dbReference type="RefSeq" id="NP_050784.1">
    <property type="nucleotide sequence ID" value="NC_000926.1"/>
</dbReference>
<dbReference type="SMR" id="O46909"/>
<dbReference type="GeneID" id="857092"/>
<dbReference type="HOGENOM" id="CLU_098841_0_1_1"/>
<dbReference type="OMA" id="NKQIYAQ"/>
<dbReference type="GO" id="GO:0009507">
    <property type="term" value="C:chloroplast"/>
    <property type="evidence" value="ECO:0007669"/>
    <property type="project" value="UniProtKB-SubCell"/>
</dbReference>
<dbReference type="GO" id="GO:1990904">
    <property type="term" value="C:ribonucleoprotein complex"/>
    <property type="evidence" value="ECO:0007669"/>
    <property type="project" value="UniProtKB-KW"/>
</dbReference>
<dbReference type="GO" id="GO:0005840">
    <property type="term" value="C:ribosome"/>
    <property type="evidence" value="ECO:0007669"/>
    <property type="project" value="UniProtKB-KW"/>
</dbReference>
<dbReference type="GO" id="GO:0008097">
    <property type="term" value="F:5S rRNA binding"/>
    <property type="evidence" value="ECO:0007669"/>
    <property type="project" value="TreeGrafter"/>
</dbReference>
<dbReference type="GO" id="GO:0003735">
    <property type="term" value="F:structural constituent of ribosome"/>
    <property type="evidence" value="ECO:0007669"/>
    <property type="project" value="InterPro"/>
</dbReference>
<dbReference type="GO" id="GO:0006412">
    <property type="term" value="P:translation"/>
    <property type="evidence" value="ECO:0007669"/>
    <property type="project" value="UniProtKB-UniRule"/>
</dbReference>
<dbReference type="CDD" id="cd00432">
    <property type="entry name" value="Ribosomal_L18_L5e"/>
    <property type="match status" value="1"/>
</dbReference>
<dbReference type="FunFam" id="3.30.420.100:FF:000001">
    <property type="entry name" value="50S ribosomal protein L18"/>
    <property type="match status" value="1"/>
</dbReference>
<dbReference type="Gene3D" id="3.30.420.100">
    <property type="match status" value="1"/>
</dbReference>
<dbReference type="HAMAP" id="MF_01337_B">
    <property type="entry name" value="Ribosomal_uL18_B"/>
    <property type="match status" value="1"/>
</dbReference>
<dbReference type="InterPro" id="IPR004389">
    <property type="entry name" value="Ribosomal_uL18_bac-type"/>
</dbReference>
<dbReference type="InterPro" id="IPR005484">
    <property type="entry name" value="Ribosomal_uL18_bac/euk"/>
</dbReference>
<dbReference type="NCBIfam" id="TIGR00060">
    <property type="entry name" value="L18_bact"/>
    <property type="match status" value="1"/>
</dbReference>
<dbReference type="PANTHER" id="PTHR12899">
    <property type="entry name" value="39S RIBOSOMAL PROTEIN L18, MITOCHONDRIAL"/>
    <property type="match status" value="1"/>
</dbReference>
<dbReference type="PANTHER" id="PTHR12899:SF3">
    <property type="entry name" value="LARGE RIBOSOMAL SUBUNIT PROTEIN UL18M"/>
    <property type="match status" value="1"/>
</dbReference>
<dbReference type="Pfam" id="PF00861">
    <property type="entry name" value="Ribosomal_L18p"/>
    <property type="match status" value="1"/>
</dbReference>
<dbReference type="SUPFAM" id="SSF53137">
    <property type="entry name" value="Translational machinery components"/>
    <property type="match status" value="1"/>
</dbReference>
<comment type="function">
    <text evidence="1">Binds 5S rRNA, forms part of the central protuberance of the 50S subunit.</text>
</comment>
<comment type="subunit">
    <text evidence="1">Part of the 50S ribosomal subunit; contacts the 5S rRNA.</text>
</comment>
<comment type="subcellular location">
    <subcellularLocation>
        <location>Plastid</location>
        <location>Chloroplast</location>
    </subcellularLocation>
</comment>
<comment type="similarity">
    <text evidence="2">Belongs to the universal ribosomal protein uL18 family.</text>
</comment>
<gene>
    <name type="primary">rpl18</name>
</gene>
<feature type="chain" id="PRO_0000131426" description="Large ribosomal subunit protein uL18c">
    <location>
        <begin position="1"/>
        <end position="107"/>
    </location>
</feature>
<geneLocation type="chloroplast"/>
<reference key="1">
    <citation type="journal article" date="1997" name="Biochem. Mol. Biol. Int.">
        <title>The large ribosomal protein gene cluster of a cryptomonad plastid: gene organization, sequence and evolutionary implications.</title>
        <authorList>
            <person name="Wang S.L."/>
            <person name="Liu X.-Q."/>
            <person name="Douglas S.E."/>
        </authorList>
    </citation>
    <scope>NUCLEOTIDE SEQUENCE [GENOMIC DNA]</scope>
</reference>
<reference key="2">
    <citation type="journal article" date="1999" name="J. Mol. Evol.">
        <title>The plastid genome of the cryptophyte alga, Guillardia theta: complete sequence and conserved synteny groups confirm its common ancestry with red algae.</title>
        <authorList>
            <person name="Douglas S.E."/>
            <person name="Penny S.L."/>
        </authorList>
    </citation>
    <scope>NUCLEOTIDE SEQUENCE [LARGE SCALE GENOMIC DNA]</scope>
</reference>
<accession>O46909</accession>
<organism>
    <name type="scientific">Guillardia theta</name>
    <name type="common">Cryptophyte</name>
    <name type="synonym">Cryptomonas phi</name>
    <dbReference type="NCBI Taxonomy" id="55529"/>
    <lineage>
        <taxon>Eukaryota</taxon>
        <taxon>Cryptophyceae</taxon>
        <taxon>Pyrenomonadales</taxon>
        <taxon>Geminigeraceae</taxon>
        <taxon>Guillardia</taxon>
    </lineage>
</organism>
<sequence>MKRTNKIKGTLERPRLSVFRSNCHIYAQVIDDSSGMTIVSTSTLDKDVKSLLNNTSTCEASKIVGQVIAKKTLARNIKQVIFDRGKRVYHGRISALAEAARESGLEF</sequence>
<proteinExistence type="inferred from homology"/>
<keyword id="KW-0150">Chloroplast</keyword>
<keyword id="KW-0934">Plastid</keyword>
<keyword id="KW-0687">Ribonucleoprotein</keyword>
<keyword id="KW-0689">Ribosomal protein</keyword>
<keyword id="KW-0694">RNA-binding</keyword>
<keyword id="KW-0699">rRNA-binding</keyword>